<proteinExistence type="evidence at protein level"/>
<dbReference type="EMBL" id="S73882">
    <property type="protein sequence ID" value="AAB31766.1"/>
    <property type="molecule type" value="mRNA"/>
</dbReference>
<dbReference type="EMBL" id="U63386">
    <property type="protein sequence ID" value="AAC28974.1"/>
    <property type="molecule type" value="mRNA"/>
</dbReference>
<dbReference type="EMBL" id="AC153579">
    <property type="status" value="NOT_ANNOTATED_CDS"/>
    <property type="molecule type" value="Genomic_DNA"/>
</dbReference>
<dbReference type="EMBL" id="BC046535">
    <property type="protein sequence ID" value="AAH46535.1"/>
    <property type="molecule type" value="mRNA"/>
</dbReference>
<dbReference type="EMBL" id="BC052394">
    <property type="protein sequence ID" value="AAH52394.1"/>
    <property type="molecule type" value="mRNA"/>
</dbReference>
<dbReference type="EMBL" id="AK036370">
    <property type="protein sequence ID" value="BAC29400.1"/>
    <property type="molecule type" value="mRNA"/>
</dbReference>
<dbReference type="CCDS" id="CCDS20494.1">
    <molecule id="Q64028-1"/>
</dbReference>
<dbReference type="CCDS" id="CCDS39620.1">
    <molecule id="Q64028-3"/>
</dbReference>
<dbReference type="RefSeq" id="NP_001036088.1">
    <molecule id="Q64028-3"/>
    <property type="nucleotide sequence ID" value="NM_001042623.3"/>
</dbReference>
<dbReference type="RefSeq" id="NP_001258508.1">
    <molecule id="Q64028-1"/>
    <property type="nucleotide sequence ID" value="NM_001271579.2"/>
</dbReference>
<dbReference type="RefSeq" id="NP_001395176.1">
    <molecule id="Q64028-3"/>
    <property type="nucleotide sequence ID" value="NM_001408247.1"/>
</dbReference>
<dbReference type="RefSeq" id="NP_001395177.1">
    <molecule id="Q64028-3"/>
    <property type="nucleotide sequence ID" value="NM_001408248.1"/>
</dbReference>
<dbReference type="RefSeq" id="NP_031931.2">
    <molecule id="Q64028-1"/>
    <property type="nucleotide sequence ID" value="NM_007905.4"/>
</dbReference>
<dbReference type="SMR" id="Q64028"/>
<dbReference type="BioGRID" id="199382">
    <property type="interactions" value="14"/>
</dbReference>
<dbReference type="CORUM" id="Q64028"/>
<dbReference type="DIP" id="DIP-456N"/>
<dbReference type="FunCoup" id="Q64028">
    <property type="interactions" value="1685"/>
</dbReference>
<dbReference type="IntAct" id="Q64028">
    <property type="interactions" value="11"/>
</dbReference>
<dbReference type="MINT" id="Q64028"/>
<dbReference type="STRING" id="10090.ENSMUSP00000125580"/>
<dbReference type="GlyGen" id="Q64028">
    <property type="glycosylation" value="12 sites, 1 O-linked glycan (9 sites)"/>
</dbReference>
<dbReference type="iPTMnet" id="Q64028"/>
<dbReference type="PhosphoSitePlus" id="Q64028"/>
<dbReference type="PaxDb" id="10090-ENSMUSP00000125580"/>
<dbReference type="ProteomicsDB" id="287923">
    <molecule id="Q64028-1"/>
</dbReference>
<dbReference type="ProteomicsDB" id="287924">
    <molecule id="Q64028-2"/>
</dbReference>
<dbReference type="ProteomicsDB" id="287925">
    <molecule id="Q64028-3"/>
</dbReference>
<dbReference type="ProteomicsDB" id="330592"/>
<dbReference type="Pumba" id="Q64028"/>
<dbReference type="Antibodypedia" id="1884">
    <property type="antibodies" value="199 antibodies from 28 providers"/>
</dbReference>
<dbReference type="DNASU" id="13619"/>
<dbReference type="Ensembl" id="ENSMUST00000079560.10">
    <molecule id="Q64028-1"/>
    <property type="protein sequence ID" value="ENSMUSP00000078514.4"/>
    <property type="gene ID" value="ENSMUSG00000040669.15"/>
</dbReference>
<dbReference type="Ensembl" id="ENSMUST00000081849.10">
    <molecule id="Q64028-3"/>
    <property type="protein sequence ID" value="ENSMUSP00000080532.4"/>
    <property type="gene ID" value="ENSMUSG00000040669.15"/>
</dbReference>
<dbReference type="Ensembl" id="ENSMUST00000112600.9">
    <molecule id="Q64028-3"/>
    <property type="protein sequence ID" value="ENSMUSP00000108219.3"/>
    <property type="gene ID" value="ENSMUSG00000040669.15"/>
</dbReference>
<dbReference type="Ensembl" id="ENSMUST00000160696.8">
    <molecule id="Q64028-1"/>
    <property type="protein sequence ID" value="ENSMUSP00000125580.2"/>
    <property type="gene ID" value="ENSMUSG00000040669.15"/>
</dbReference>
<dbReference type="Ensembl" id="ENSMUST00000161054.8">
    <molecule id="Q64028-3"/>
    <property type="protein sequence ID" value="ENSMUSP00000123911.2"/>
    <property type="gene ID" value="ENSMUSG00000040669.15"/>
</dbReference>
<dbReference type="Ensembl" id="ENSMUST00000161739.8">
    <molecule id="Q64028-1"/>
    <property type="protein sequence ID" value="ENSMUSP00000125568.2"/>
    <property type="gene ID" value="ENSMUSG00000040669.15"/>
</dbReference>
<dbReference type="GeneID" id="13619"/>
<dbReference type="KEGG" id="mmu:13619"/>
<dbReference type="AGR" id="MGI:103248"/>
<dbReference type="CTD" id="1911"/>
<dbReference type="MGI" id="MGI:103248">
    <property type="gene designation" value="Phc1"/>
</dbReference>
<dbReference type="VEuPathDB" id="HostDB:ENSMUSG00000040669"/>
<dbReference type="eggNOG" id="ENOG502QUTP">
    <property type="taxonomic scope" value="Eukaryota"/>
</dbReference>
<dbReference type="GeneTree" id="ENSGT00940000156612"/>
<dbReference type="HOGENOM" id="CLU_012048_1_0_1"/>
<dbReference type="InParanoid" id="Q64028"/>
<dbReference type="OMA" id="TCAKYNV"/>
<dbReference type="OrthoDB" id="2390104at2759"/>
<dbReference type="PhylomeDB" id="Q64028"/>
<dbReference type="TreeFam" id="TF331299"/>
<dbReference type="Reactome" id="R-MMU-3108214">
    <property type="pathway name" value="SUMOylation of DNA damage response and repair proteins"/>
</dbReference>
<dbReference type="Reactome" id="R-MMU-3899300">
    <property type="pathway name" value="SUMOylation of transcription cofactors"/>
</dbReference>
<dbReference type="Reactome" id="R-MMU-4551638">
    <property type="pathway name" value="SUMOylation of chromatin organization proteins"/>
</dbReference>
<dbReference type="Reactome" id="R-MMU-4570464">
    <property type="pathway name" value="SUMOylation of RNA binding proteins"/>
</dbReference>
<dbReference type="Reactome" id="R-MMU-8939243">
    <property type="pathway name" value="RUNX1 interacts with co-factors whose precise effect on RUNX1 targets is not known"/>
</dbReference>
<dbReference type="Reactome" id="R-MMU-8953750">
    <property type="pathway name" value="Transcriptional Regulation by E2F6"/>
</dbReference>
<dbReference type="BioGRID-ORCS" id="13619">
    <property type="hits" value="1 hit in 79 CRISPR screens"/>
</dbReference>
<dbReference type="ChiTaRS" id="Phc1">
    <property type="organism name" value="mouse"/>
</dbReference>
<dbReference type="PRO" id="PR:Q64028"/>
<dbReference type="Proteomes" id="UP000000589">
    <property type="component" value="Chromosome 6"/>
</dbReference>
<dbReference type="RNAct" id="Q64028">
    <property type="molecule type" value="protein"/>
</dbReference>
<dbReference type="Bgee" id="ENSMUSG00000040669">
    <property type="expression patterns" value="Expressed in seminiferous tubule of testis and 273 other cell types or tissues"/>
</dbReference>
<dbReference type="GO" id="GO:0016604">
    <property type="term" value="C:nuclear body"/>
    <property type="evidence" value="ECO:0000314"/>
    <property type="project" value="MGI"/>
</dbReference>
<dbReference type="GO" id="GO:0005634">
    <property type="term" value="C:nucleus"/>
    <property type="evidence" value="ECO:0000314"/>
    <property type="project" value="MGI"/>
</dbReference>
<dbReference type="GO" id="GO:0035102">
    <property type="term" value="C:PRC1 complex"/>
    <property type="evidence" value="ECO:0000250"/>
    <property type="project" value="UniProtKB"/>
</dbReference>
<dbReference type="GO" id="GO:0001739">
    <property type="term" value="C:sex chromatin"/>
    <property type="evidence" value="ECO:0000314"/>
    <property type="project" value="MGI"/>
</dbReference>
<dbReference type="GO" id="GO:0003682">
    <property type="term" value="F:chromatin binding"/>
    <property type="evidence" value="ECO:0000314"/>
    <property type="project" value="MGI"/>
</dbReference>
<dbReference type="GO" id="GO:0003677">
    <property type="term" value="F:DNA binding"/>
    <property type="evidence" value="ECO:0007669"/>
    <property type="project" value="UniProtKB-KW"/>
</dbReference>
<dbReference type="GO" id="GO:0008270">
    <property type="term" value="F:zinc ion binding"/>
    <property type="evidence" value="ECO:0007669"/>
    <property type="project" value="UniProtKB-KW"/>
</dbReference>
<dbReference type="GO" id="GO:1990830">
    <property type="term" value="P:cellular response to leukemia inhibitory factor"/>
    <property type="evidence" value="ECO:0000270"/>
    <property type="project" value="MGI"/>
</dbReference>
<dbReference type="GO" id="GO:0071300">
    <property type="term" value="P:cellular response to retinoic acid"/>
    <property type="evidence" value="ECO:0000314"/>
    <property type="project" value="MGI"/>
</dbReference>
<dbReference type="GO" id="GO:0006338">
    <property type="term" value="P:chromatin remodeling"/>
    <property type="evidence" value="ECO:0000250"/>
    <property type="project" value="UniProtKB"/>
</dbReference>
<dbReference type="CDD" id="cd09577">
    <property type="entry name" value="SAM_Ph1_2_3"/>
    <property type="match status" value="1"/>
</dbReference>
<dbReference type="FunFam" id="1.10.150.50:FF:000011">
    <property type="entry name" value="Polyhomeotic-like protein 2 isoform 1"/>
    <property type="match status" value="1"/>
</dbReference>
<dbReference type="FunFam" id="3.30.60.160:FF:000002">
    <property type="entry name" value="Polyhomeotic-like protein 2 isoform 1"/>
    <property type="match status" value="1"/>
</dbReference>
<dbReference type="Gene3D" id="3.30.60.160">
    <property type="match status" value="1"/>
</dbReference>
<dbReference type="Gene3D" id="1.10.150.50">
    <property type="entry name" value="Transcription Factor, Ets-1"/>
    <property type="match status" value="1"/>
</dbReference>
<dbReference type="InterPro" id="IPR050548">
    <property type="entry name" value="PcG_chromatin_remod_factors"/>
</dbReference>
<dbReference type="InterPro" id="IPR001660">
    <property type="entry name" value="SAM"/>
</dbReference>
<dbReference type="InterPro" id="IPR013761">
    <property type="entry name" value="SAM/pointed_sf"/>
</dbReference>
<dbReference type="InterPro" id="IPR012313">
    <property type="entry name" value="Znf_FCS"/>
</dbReference>
<dbReference type="InterPro" id="IPR038603">
    <property type="entry name" value="Znf_FCS_sf"/>
</dbReference>
<dbReference type="PANTHER" id="PTHR12247">
    <property type="entry name" value="POLYCOMB GROUP PROTEIN"/>
    <property type="match status" value="1"/>
</dbReference>
<dbReference type="PANTHER" id="PTHR12247:SF20">
    <property type="entry name" value="POLYHOMEOTIC-LIKE PROTEIN 1"/>
    <property type="match status" value="1"/>
</dbReference>
<dbReference type="Pfam" id="PF16616">
    <property type="entry name" value="PHC2_SAM_assoc"/>
    <property type="match status" value="1"/>
</dbReference>
<dbReference type="Pfam" id="PF00536">
    <property type="entry name" value="SAM_1"/>
    <property type="match status" value="1"/>
</dbReference>
<dbReference type="Pfam" id="PF21319">
    <property type="entry name" value="zf-FCS_1"/>
    <property type="match status" value="1"/>
</dbReference>
<dbReference type="SMART" id="SM00454">
    <property type="entry name" value="SAM"/>
    <property type="match status" value="1"/>
</dbReference>
<dbReference type="SUPFAM" id="SSF47769">
    <property type="entry name" value="SAM/Pointed domain"/>
    <property type="match status" value="1"/>
</dbReference>
<dbReference type="PROSITE" id="PS50105">
    <property type="entry name" value="SAM_DOMAIN"/>
    <property type="match status" value="1"/>
</dbReference>
<dbReference type="PROSITE" id="PS51024">
    <property type="entry name" value="ZF_FCS"/>
    <property type="match status" value="1"/>
</dbReference>
<evidence type="ECO:0000250" key="1"/>
<evidence type="ECO:0000250" key="2">
    <source>
        <dbReference type="UniProtKB" id="P78364"/>
    </source>
</evidence>
<evidence type="ECO:0000255" key="3">
    <source>
        <dbReference type="PROSITE-ProRule" id="PRU00184"/>
    </source>
</evidence>
<evidence type="ECO:0000255" key="4">
    <source>
        <dbReference type="PROSITE-ProRule" id="PRU00367"/>
    </source>
</evidence>
<evidence type="ECO:0000256" key="5">
    <source>
        <dbReference type="SAM" id="MobiDB-lite"/>
    </source>
</evidence>
<evidence type="ECO:0000269" key="6">
    <source>
    </source>
</evidence>
<evidence type="ECO:0000269" key="7">
    <source>
    </source>
</evidence>
<evidence type="ECO:0000269" key="8">
    <source>
    </source>
</evidence>
<evidence type="ECO:0000269" key="9">
    <source>
    </source>
</evidence>
<evidence type="ECO:0000269" key="10">
    <source>
    </source>
</evidence>
<evidence type="ECO:0000269" key="11">
    <source>
    </source>
</evidence>
<evidence type="ECO:0000303" key="12">
    <source>
    </source>
</evidence>
<evidence type="ECO:0000305" key="13"/>
<evidence type="ECO:0000312" key="14">
    <source>
        <dbReference type="MGI" id="MGI:103248"/>
    </source>
</evidence>
<protein>
    <recommendedName>
        <fullName evidence="13">Polyhomeotic-like protein 1</fullName>
        <shortName>mPH1</shortName>
    </recommendedName>
    <alternativeName>
        <fullName>Early development regulatory protein 1</fullName>
    </alternativeName>
    <alternativeName>
        <fullName>RAE-28</fullName>
    </alternativeName>
</protein>
<comment type="function">
    <text evidence="1 11">Component of a Polycomb group (PcG) multiprotein PRC1-like complex, a complex class required to maintain the transcriptionally repressive state of many genes, including Hox genes, throughout development. PcG PRC1 complex acts via chromatin remodeling and modification of histones; it mediates monoubiquitination of histone H2A 'Lys-119', rendering chromatin heritably changed in its expressibility. Required for proper control of cellular levels of GMNN expression (By similarity).</text>
</comment>
<comment type="subunit">
    <text evidence="2 6 7 8 10">Homodimer. Component of a PRC1-like complex (By similarity). Interacts with the SAM domain of SCMH1 via its SAM domain in vitro (PubMed:10653359). Interacts with RNF2 and CBX7 (PubMed:22226355). Interacts with PHC2 (PubMed:16024804). Interacts with BMI1 (PubMed:9009205).</text>
</comment>
<comment type="interaction">
    <interactant intactId="EBI-927346">
        <id>Q64028</id>
    </interactant>
    <interactant intactId="EBI-298776">
        <id>P49138</id>
        <label>Mapkapk2</label>
    </interactant>
    <organismsDiffer>false</organismsDiffer>
    <experiments>2</experiments>
</comment>
<comment type="interaction">
    <interactant intactId="EBI-927346">
        <id>Q64028</id>
    </interactant>
    <interactant intactId="EBI-926857">
        <id>P23798</id>
        <label>Pcgf2</label>
    </interactant>
    <organismsDiffer>false</organismsDiffer>
    <experiments>4</experiments>
</comment>
<comment type="interaction">
    <interactant intactId="EBI-927346">
        <id>Q64028</id>
    </interactant>
    <interactant intactId="EBI-642357">
        <id>Q9QWH1</id>
        <label>Phc2</label>
    </interactant>
    <organismsDiffer>false</organismsDiffer>
    <experiments>2</experiments>
</comment>
<comment type="interaction">
    <interactant intactId="EBI-927346">
        <id>Q64028</id>
    </interactant>
    <interactant intactId="EBI-927321">
        <id>Q9CQJ4</id>
        <label>Rnf2</label>
    </interactant>
    <organismsDiffer>false</organismsDiffer>
    <experiments>7</experiments>
</comment>
<comment type="interaction">
    <interactant intactId="EBI-927346">
        <id>Q64028</id>
    </interactant>
    <interactant intactId="EBI-445955">
        <id>Q8K214</id>
        <label>Scmh1</label>
    </interactant>
    <organismsDiffer>false</organismsDiffer>
    <experiments>2</experiments>
</comment>
<comment type="subcellular location">
    <subcellularLocation>
        <location>Nucleus</location>
    </subcellularLocation>
</comment>
<comment type="alternative products">
    <event type="alternative splicing"/>
    <isoform>
        <id>Q64028-1</id>
        <name>1</name>
        <sequence type="displayed"/>
    </isoform>
    <isoform>
        <id>Q64028-2</id>
        <name>2</name>
        <sequence type="described" ref="VSP_004040"/>
    </isoform>
    <isoform>
        <id>Q64028-3</id>
        <name>3</name>
        <sequence type="described" ref="VSP_004041"/>
    </isoform>
</comment>
<comment type="tissue specificity">
    <text evidence="8">Highly expressed in testis with lower levels in most other tissues. Expressed in embryonic stem cells (PubMed:22226355).</text>
</comment>
<comment type="developmental stage">
    <text evidence="6">Expressed ubiquitously in 8.5 dpc embryos. At 10.5 dpc, strongly expressed in pharyngeal arches and weakly expressed in heart. By 14.5 dpc, expression is detected throughout the central nervous system.</text>
</comment>
<comment type="induction">
    <text evidence="9">By retinoic acid.</text>
</comment>
<name>PHC1_MOUSE</name>
<feature type="chain" id="PRO_0000058376" description="Polyhomeotic-like protein 1">
    <location>
        <begin position="1"/>
        <end position="1010"/>
    </location>
</feature>
<feature type="domain" description="SAM" evidence="3">
    <location>
        <begin position="946"/>
        <end position="1010"/>
    </location>
</feature>
<feature type="zinc finger region" description="FCS-type" evidence="4">
    <location>
        <begin position="797"/>
        <end position="831"/>
    </location>
</feature>
<feature type="region of interest" description="Disordered" evidence="5">
    <location>
        <begin position="1"/>
        <end position="25"/>
    </location>
</feature>
<feature type="region of interest" description="Disordered" evidence="5">
    <location>
        <begin position="212"/>
        <end position="243"/>
    </location>
</feature>
<feature type="region of interest" description="Disordered" evidence="5">
    <location>
        <begin position="259"/>
        <end position="312"/>
    </location>
</feature>
<feature type="region of interest" description="Disordered" evidence="5">
    <location>
        <begin position="444"/>
        <end position="506"/>
    </location>
</feature>
<feature type="region of interest" description="Disordered" evidence="5">
    <location>
        <begin position="565"/>
        <end position="588"/>
    </location>
</feature>
<feature type="region of interest" description="Disordered" evidence="5">
    <location>
        <begin position="646"/>
        <end position="678"/>
    </location>
</feature>
<feature type="region of interest" description="Disordered" evidence="5">
    <location>
        <begin position="772"/>
        <end position="794"/>
    </location>
</feature>
<feature type="region of interest" description="Disordered" evidence="5">
    <location>
        <begin position="854"/>
        <end position="928"/>
    </location>
</feature>
<feature type="compositionally biased region" description="Low complexity" evidence="5">
    <location>
        <begin position="1"/>
        <end position="22"/>
    </location>
</feature>
<feature type="compositionally biased region" description="Polar residues" evidence="5">
    <location>
        <begin position="212"/>
        <end position="228"/>
    </location>
</feature>
<feature type="compositionally biased region" description="Gly residues" evidence="5">
    <location>
        <begin position="279"/>
        <end position="292"/>
    </location>
</feature>
<feature type="compositionally biased region" description="Pro residues" evidence="5">
    <location>
        <begin position="453"/>
        <end position="463"/>
    </location>
</feature>
<feature type="compositionally biased region" description="Low complexity" evidence="5">
    <location>
        <begin position="464"/>
        <end position="480"/>
    </location>
</feature>
<feature type="compositionally biased region" description="Pro residues" evidence="5">
    <location>
        <begin position="488"/>
        <end position="500"/>
    </location>
</feature>
<feature type="compositionally biased region" description="Low complexity" evidence="5">
    <location>
        <begin position="575"/>
        <end position="587"/>
    </location>
</feature>
<feature type="binding site" evidence="4">
    <location>
        <position position="806"/>
    </location>
    <ligand>
        <name>Zn(2+)</name>
        <dbReference type="ChEBI" id="CHEBI:29105"/>
    </ligand>
</feature>
<feature type="binding site" evidence="4">
    <location>
        <position position="809"/>
    </location>
    <ligand>
        <name>Zn(2+)</name>
        <dbReference type="ChEBI" id="CHEBI:29105"/>
    </ligand>
</feature>
<feature type="binding site" evidence="4">
    <location>
        <position position="825"/>
    </location>
    <ligand>
        <name>Zn(2+)</name>
        <dbReference type="ChEBI" id="CHEBI:29105"/>
    </ligand>
</feature>
<feature type="binding site" evidence="4">
    <location>
        <position position="829"/>
    </location>
    <ligand>
        <name>Zn(2+)</name>
        <dbReference type="ChEBI" id="CHEBI:29105"/>
    </ligand>
</feature>
<feature type="modified residue" description="Phosphoserine" evidence="2">
    <location>
        <position position="651"/>
    </location>
</feature>
<feature type="modified residue" description="Phosphoserine" evidence="2">
    <location>
        <position position="904"/>
    </location>
</feature>
<feature type="modified residue" description="Phosphothreonine" evidence="2">
    <location>
        <position position="928"/>
    </location>
</feature>
<feature type="cross-link" description="Glycyl lysine isopeptide (Lys-Gly) (interchain with G-Cter in SUMO2)" evidence="2">
    <location>
        <position position="769"/>
    </location>
</feature>
<feature type="splice variant" id="VSP_004041" description="In isoform 3." evidence="12">
    <location>
        <begin position="153"/>
        <end position="204"/>
    </location>
</feature>
<feature type="splice variant" id="VSP_004040" description="In isoform 2." evidence="12">
    <location>
        <begin position="153"/>
        <end position="159"/>
    </location>
</feature>
<feature type="sequence conflict" description="In Ref. 2; AAC28974." evidence="13" ref="2">
    <original>T</original>
    <variation>A</variation>
    <location>
        <position position="127"/>
    </location>
</feature>
<feature type="sequence conflict" description="In Ref. 2; AAC28974." evidence="13" ref="2">
    <original>S</original>
    <variation>W</variation>
    <location>
        <position position="131"/>
    </location>
</feature>
<feature type="sequence conflict" description="In Ref. 1; AAB31766." evidence="13" ref="1">
    <original>I</original>
    <variation>Y</variation>
    <location>
        <position position="401"/>
    </location>
</feature>
<feature type="sequence conflict" description="In Ref. 1; AAB31766, 4; AAH46535 and 2; AAC28974." evidence="13" ref="1 4 2">
    <original>Q</original>
    <variation>QQQ</variation>
    <location>
        <position position="446"/>
    </location>
</feature>
<feature type="sequence conflict" description="In Ref. 1; AAB31766, 4; AAH46535 and 2; AAC28974." evidence="13" ref="1 4 2">
    <original>K</original>
    <variation>E</variation>
    <location>
        <position position="768"/>
    </location>
</feature>
<keyword id="KW-0025">Alternative splicing</keyword>
<keyword id="KW-0217">Developmental protein</keyword>
<keyword id="KW-0238">DNA-binding</keyword>
<keyword id="KW-1017">Isopeptide bond</keyword>
<keyword id="KW-0479">Metal-binding</keyword>
<keyword id="KW-0539">Nucleus</keyword>
<keyword id="KW-0597">Phosphoprotein</keyword>
<keyword id="KW-1185">Reference proteome</keyword>
<keyword id="KW-0832">Ubl conjugation</keyword>
<keyword id="KW-0862">Zinc</keyword>
<keyword id="KW-0863">Zinc-finger</keyword>
<gene>
    <name evidence="14" type="primary">Phc1</name>
    <name type="synonym">Edr</name>
    <name type="synonym">Edr1</name>
    <name type="synonym">Rae28</name>
</gene>
<organism>
    <name type="scientific">Mus musculus</name>
    <name type="common">Mouse</name>
    <dbReference type="NCBI Taxonomy" id="10090"/>
    <lineage>
        <taxon>Eukaryota</taxon>
        <taxon>Metazoa</taxon>
        <taxon>Chordata</taxon>
        <taxon>Craniata</taxon>
        <taxon>Vertebrata</taxon>
        <taxon>Euteleostomi</taxon>
        <taxon>Mammalia</taxon>
        <taxon>Eutheria</taxon>
        <taxon>Euarchontoglires</taxon>
        <taxon>Glires</taxon>
        <taxon>Rodentia</taxon>
        <taxon>Myomorpha</taxon>
        <taxon>Muroidea</taxon>
        <taxon>Muridae</taxon>
        <taxon>Murinae</taxon>
        <taxon>Mus</taxon>
        <taxon>Mus</taxon>
    </lineage>
</organism>
<sequence length="1010" mass="106060">METESEQNSSSTNGSSSSGASSRPQIAQMSLYERQAVQALQALQRQPNAAQYFHQFMLQQQLSNAQLHSLAAVQQATIAASRQASSPNSSTAQQQTATTQASMNLATTSAAQLISRSQSVSSPSATTLTQSVLLGNTTSPPLNQSQAQMYLRPQLGNLLQVNRTLGRNVPLASQLILMPNGAVAAVQQEVPPAQSPGVHADADQVQNLAVRNQQASAQGPQMPGSTQKAIPPGASPVSGLSQTSSQALAVAQASSGASGQSLNLSQAGGGSGNSLPGSMGPGGGGQAPGGLGQLPSSGLTGGSCPRKGTGVVQPLPAAQTVTVSQGSQTEAESAAAKKAEADGSGQQSVGMNLTRTATPAPSQTLISSATYTQIQPHSLIQQQQQIHLQQKQVVIQQQIAIHHQQQFQHRQSQLLHTATHLQLAQQQQQQQQQQQQQQQQQQQQQQGTTLTAPQPPQVPPTQQVPPSQSQQQAQTLVVQPMLQSSPLTLPPEPTSKPPIPIQSKPPVAPIKPPQLGAAKMSATQQPPPHIPVQVVGTRQPGSAQAQALGLAQLAAAVPTPRGITGAVQPGQAHLASSPPSSQAAPGALQECPPALAAGMTLAPVQGTAHVVKGGPTASSPVVAQVPAAFYMQSVHLPGKAQTLAVKRKAESEEERDDLSALASVLPTKASPAAESPKVIEEKNSLGEKAEPVASLNANPPNSDLVALAPTPSAPPPTLALVSRQMGDSKPPQAIVKPQILTHIIEGFVIQEGAEPFPVGCSQFLKETKKPLQAGLPTGLNESQPSGPLGGDSPSVELEKKANLLKCEYCGKYAPAEQFRGSKRFCSMTCAKRYNVSCSHQFRLKRKKMKEFQEASYARVRRRGPRRSSSDIARAKIQGKRHRGQEDSSRGSDNSSYDEALSPTSPGPLSVRAGHGERDLGNTITTPSTPELQGINPVFLSSNPSQWSVEEVYEFIASLQGCQEIAEEFRSQEIDGQALLLLKEEHLMSAMNIKLGPALKICAKINVLKET</sequence>
<reference key="1">
    <citation type="journal article" date="1994" name="Differentiation">
        <title>Isolation and characterization of retinoic acid-inducible cDNA clones in F9 cells: one of the early inducible clones encodes a novel protein sharing several highly homologous regions with a Drosophila polyhomeotic protein.</title>
        <authorList>
            <person name="Nomura M."/>
            <person name="Takihara Y."/>
            <person name="Shimada K."/>
        </authorList>
    </citation>
    <scope>NUCLEOTIDE SEQUENCE [MRNA] (ISOFORM 1)</scope>
    <scope>INDUCTION</scope>
    <source>
        <strain>BALB/cJ</strain>
    </source>
</reference>
<reference key="2">
    <citation type="journal article" date="1997" name="Genes Dev.">
        <title>Identification of Bmi1-interacting proteins as constituents of a multimeric mammalian polycomb complex.</title>
        <authorList>
            <person name="Alkema M.J."/>
            <person name="Bronk M."/>
            <person name="Verhoeven E."/>
            <person name="Otte A."/>
            <person name="van't Veer L.J."/>
            <person name="Berns A."/>
            <person name="van Lohuizen M."/>
        </authorList>
    </citation>
    <scope>NUCLEOTIDE SEQUENCE [MRNA] (ISOFORMS 1; 2 AND 3)</scope>
    <scope>INTERACTION WITH BMI1</scope>
    <source>
        <tissue>Embryo</tissue>
    </source>
</reference>
<reference key="3">
    <citation type="journal article" date="2009" name="PLoS Biol.">
        <title>Lineage-specific biology revealed by a finished genome assembly of the mouse.</title>
        <authorList>
            <person name="Church D.M."/>
            <person name="Goodstadt L."/>
            <person name="Hillier L.W."/>
            <person name="Zody M.C."/>
            <person name="Goldstein S."/>
            <person name="She X."/>
            <person name="Bult C.J."/>
            <person name="Agarwala R."/>
            <person name="Cherry J.L."/>
            <person name="DiCuccio M."/>
            <person name="Hlavina W."/>
            <person name="Kapustin Y."/>
            <person name="Meric P."/>
            <person name="Maglott D."/>
            <person name="Birtle Z."/>
            <person name="Marques A.C."/>
            <person name="Graves T."/>
            <person name="Zhou S."/>
            <person name="Teague B."/>
            <person name="Potamousis K."/>
            <person name="Churas C."/>
            <person name="Place M."/>
            <person name="Herschleb J."/>
            <person name="Runnheim R."/>
            <person name="Forrest D."/>
            <person name="Amos-Landgraf J."/>
            <person name="Schwartz D.C."/>
            <person name="Cheng Z."/>
            <person name="Lindblad-Toh K."/>
            <person name="Eichler E.E."/>
            <person name="Ponting C.P."/>
        </authorList>
    </citation>
    <scope>NUCLEOTIDE SEQUENCE [LARGE SCALE GENOMIC DNA]</scope>
    <source>
        <strain>C57BL/6J</strain>
    </source>
</reference>
<reference key="4">
    <citation type="journal article" date="2004" name="Genome Res.">
        <title>The status, quality, and expansion of the NIH full-length cDNA project: the Mammalian Gene Collection (MGC).</title>
        <authorList>
            <consortium name="The MGC Project Team"/>
        </authorList>
    </citation>
    <scope>NUCLEOTIDE SEQUENCE [LARGE SCALE MRNA] (ISOFORM 1)</scope>
    <source>
        <strain>NMRI</strain>
        <tissue>Mammary gland</tissue>
    </source>
</reference>
<reference key="5">
    <citation type="journal article" date="2005" name="Science">
        <title>The transcriptional landscape of the mammalian genome.</title>
        <authorList>
            <person name="Carninci P."/>
            <person name="Kasukawa T."/>
            <person name="Katayama S."/>
            <person name="Gough J."/>
            <person name="Frith M.C."/>
            <person name="Maeda N."/>
            <person name="Oyama R."/>
            <person name="Ravasi T."/>
            <person name="Lenhard B."/>
            <person name="Wells C."/>
            <person name="Kodzius R."/>
            <person name="Shimokawa K."/>
            <person name="Bajic V.B."/>
            <person name="Brenner S.E."/>
            <person name="Batalov S."/>
            <person name="Forrest A.R."/>
            <person name="Zavolan M."/>
            <person name="Davis M.J."/>
            <person name="Wilming L.G."/>
            <person name="Aidinis V."/>
            <person name="Allen J.E."/>
            <person name="Ambesi-Impiombato A."/>
            <person name="Apweiler R."/>
            <person name="Aturaliya R.N."/>
            <person name="Bailey T.L."/>
            <person name="Bansal M."/>
            <person name="Baxter L."/>
            <person name="Beisel K.W."/>
            <person name="Bersano T."/>
            <person name="Bono H."/>
            <person name="Chalk A.M."/>
            <person name="Chiu K.P."/>
            <person name="Choudhary V."/>
            <person name="Christoffels A."/>
            <person name="Clutterbuck D.R."/>
            <person name="Crowe M.L."/>
            <person name="Dalla E."/>
            <person name="Dalrymple B.P."/>
            <person name="de Bono B."/>
            <person name="Della Gatta G."/>
            <person name="di Bernardo D."/>
            <person name="Down T."/>
            <person name="Engstrom P."/>
            <person name="Fagiolini M."/>
            <person name="Faulkner G."/>
            <person name="Fletcher C.F."/>
            <person name="Fukushima T."/>
            <person name="Furuno M."/>
            <person name="Futaki S."/>
            <person name="Gariboldi M."/>
            <person name="Georgii-Hemming P."/>
            <person name="Gingeras T.R."/>
            <person name="Gojobori T."/>
            <person name="Green R.E."/>
            <person name="Gustincich S."/>
            <person name="Harbers M."/>
            <person name="Hayashi Y."/>
            <person name="Hensch T.K."/>
            <person name="Hirokawa N."/>
            <person name="Hill D."/>
            <person name="Huminiecki L."/>
            <person name="Iacono M."/>
            <person name="Ikeo K."/>
            <person name="Iwama A."/>
            <person name="Ishikawa T."/>
            <person name="Jakt M."/>
            <person name="Kanapin A."/>
            <person name="Katoh M."/>
            <person name="Kawasawa Y."/>
            <person name="Kelso J."/>
            <person name="Kitamura H."/>
            <person name="Kitano H."/>
            <person name="Kollias G."/>
            <person name="Krishnan S.P."/>
            <person name="Kruger A."/>
            <person name="Kummerfeld S.K."/>
            <person name="Kurochkin I.V."/>
            <person name="Lareau L.F."/>
            <person name="Lazarevic D."/>
            <person name="Lipovich L."/>
            <person name="Liu J."/>
            <person name="Liuni S."/>
            <person name="McWilliam S."/>
            <person name="Madan Babu M."/>
            <person name="Madera M."/>
            <person name="Marchionni L."/>
            <person name="Matsuda H."/>
            <person name="Matsuzawa S."/>
            <person name="Miki H."/>
            <person name="Mignone F."/>
            <person name="Miyake S."/>
            <person name="Morris K."/>
            <person name="Mottagui-Tabar S."/>
            <person name="Mulder N."/>
            <person name="Nakano N."/>
            <person name="Nakauchi H."/>
            <person name="Ng P."/>
            <person name="Nilsson R."/>
            <person name="Nishiguchi S."/>
            <person name="Nishikawa S."/>
            <person name="Nori F."/>
            <person name="Ohara O."/>
            <person name="Okazaki Y."/>
            <person name="Orlando V."/>
            <person name="Pang K.C."/>
            <person name="Pavan W.J."/>
            <person name="Pavesi G."/>
            <person name="Pesole G."/>
            <person name="Petrovsky N."/>
            <person name="Piazza S."/>
            <person name="Reed J."/>
            <person name="Reid J.F."/>
            <person name="Ring B.Z."/>
            <person name="Ringwald M."/>
            <person name="Rost B."/>
            <person name="Ruan Y."/>
            <person name="Salzberg S.L."/>
            <person name="Sandelin A."/>
            <person name="Schneider C."/>
            <person name="Schoenbach C."/>
            <person name="Sekiguchi K."/>
            <person name="Semple C.A."/>
            <person name="Seno S."/>
            <person name="Sessa L."/>
            <person name="Sheng Y."/>
            <person name="Shibata Y."/>
            <person name="Shimada H."/>
            <person name="Shimada K."/>
            <person name="Silva D."/>
            <person name="Sinclair B."/>
            <person name="Sperling S."/>
            <person name="Stupka E."/>
            <person name="Sugiura K."/>
            <person name="Sultana R."/>
            <person name="Takenaka Y."/>
            <person name="Taki K."/>
            <person name="Tammoja K."/>
            <person name="Tan S.L."/>
            <person name="Tang S."/>
            <person name="Taylor M.S."/>
            <person name="Tegner J."/>
            <person name="Teichmann S.A."/>
            <person name="Ueda H.R."/>
            <person name="van Nimwegen E."/>
            <person name="Verardo R."/>
            <person name="Wei C.L."/>
            <person name="Yagi K."/>
            <person name="Yamanishi H."/>
            <person name="Zabarovsky E."/>
            <person name="Zhu S."/>
            <person name="Zimmer A."/>
            <person name="Hide W."/>
            <person name="Bult C."/>
            <person name="Grimmond S.M."/>
            <person name="Teasdale R.D."/>
            <person name="Liu E.T."/>
            <person name="Brusic V."/>
            <person name="Quackenbush J."/>
            <person name="Wahlestedt C."/>
            <person name="Mattick J.S."/>
            <person name="Hume D.A."/>
            <person name="Kai C."/>
            <person name="Sasaki D."/>
            <person name="Tomaru Y."/>
            <person name="Fukuda S."/>
            <person name="Kanamori-Katayama M."/>
            <person name="Suzuki M."/>
            <person name="Aoki J."/>
            <person name="Arakawa T."/>
            <person name="Iida J."/>
            <person name="Imamura K."/>
            <person name="Itoh M."/>
            <person name="Kato T."/>
            <person name="Kawaji H."/>
            <person name="Kawagashira N."/>
            <person name="Kawashima T."/>
            <person name="Kojima M."/>
            <person name="Kondo S."/>
            <person name="Konno H."/>
            <person name="Nakano K."/>
            <person name="Ninomiya N."/>
            <person name="Nishio T."/>
            <person name="Okada M."/>
            <person name="Plessy C."/>
            <person name="Shibata K."/>
            <person name="Shiraki T."/>
            <person name="Suzuki S."/>
            <person name="Tagami M."/>
            <person name="Waki K."/>
            <person name="Watahiki A."/>
            <person name="Okamura-Oho Y."/>
            <person name="Suzuki H."/>
            <person name="Kawai J."/>
            <person name="Hayashizaki Y."/>
        </authorList>
    </citation>
    <scope>NUCLEOTIDE SEQUENCE [LARGE SCALE MRNA] OF 1-844 (ISOFORM 1)</scope>
    <source>
        <strain>C57BL/6J</strain>
        <tissue>Cerebellum</tissue>
    </source>
</reference>
<reference key="6">
    <citation type="journal article" date="1997" name="Development">
        <title>Targeted disruption of the mouse homologue of the Drosophila polyhomeotic gene leads to altered anteroposterior patterning and neural crest defects.</title>
        <authorList>
            <person name="Takihara Y."/>
            <person name="Tomotsune D."/>
            <person name="Shirai M."/>
            <person name="Katoh-Fukui Y."/>
            <person name="Nishii K."/>
            <person name="Motaleb M.A."/>
            <person name="Nomura M."/>
            <person name="Tsuchiya R."/>
            <person name="Fujita Y."/>
            <person name="Shibata Y."/>
            <person name="Higashinakagawa T."/>
            <person name="Shimada K."/>
        </authorList>
    </citation>
    <scope>FUNCTION</scope>
</reference>
<reference key="7">
    <citation type="journal article" date="1999" name="Differentiation">
        <title>A novel member of murine polycomb-group proteins, Sex comb on midleg homolog protein, is highly conserved, and interacts with RAE28/mph1 in vitro.</title>
        <authorList>
            <person name="Tomotsune D."/>
            <person name="Takihara Y."/>
            <person name="Berger J."/>
            <person name="Duhl D."/>
            <person name="Joo S."/>
            <person name="Kyba M."/>
            <person name="Shirai M."/>
            <person name="Ohta H."/>
            <person name="Matsuda Y."/>
            <person name="Honda B.M."/>
            <person name="Simon J."/>
            <person name="Shimada K."/>
            <person name="Brock H.W."/>
            <person name="Randazzo F."/>
        </authorList>
    </citation>
    <scope>DEVELOPMENTAL STAGE</scope>
    <scope>INTERACTION WITH SCMH1</scope>
</reference>
<reference key="8">
    <citation type="journal article" date="2005" name="Mol. Cell. Biol.">
        <title>Mammalian polyhomeotic homologues Phc2 and Phc1 act in synergy to mediate polycomb repression of Hox genes.</title>
        <authorList>
            <person name="Isono K."/>
            <person name="Fujimura Y."/>
            <person name="Shinga J."/>
            <person name="Yamaki M."/>
            <person name="O-Wang J."/>
            <person name="Takihara Y."/>
            <person name="Murahashi Y."/>
            <person name="Takada Y."/>
            <person name="Mizutani-Koseki Y."/>
            <person name="Koseki H."/>
        </authorList>
    </citation>
    <scope>INTERACTION WITH PHC2</scope>
</reference>
<reference key="9">
    <citation type="journal article" date="2012" name="Cell Stem Cell">
        <title>Nonoverlapping functions of the Polycomb group Cbx family of proteins in embryonic stem cells.</title>
        <authorList>
            <person name="Morey L."/>
            <person name="Pascual G."/>
            <person name="Cozzuto L."/>
            <person name="Roma G."/>
            <person name="Wutz A."/>
            <person name="Benitah S.A."/>
            <person name="Di Croce L."/>
        </authorList>
    </citation>
    <scope>INTERACTION WITH RNF2 AND CBX7</scope>
    <scope>TISSUE SPECIFICITY</scope>
</reference>
<accession>Q64028</accession>
<accession>P70359</accession>
<accession>Q64307</accession>
<accession>Q7TT35</accession>
<accession>Q8BZ80</accession>